<gene>
    <name type="primary">COS9</name>
    <name type="ordered locus">YKL219W</name>
</gene>
<sequence length="407" mass="48545">MQIVRSCNSNNKPLIPSSNWHIAIRMRGDGVKDRSIDVLSLKHFESQKVVLPQDLFMDNFTWMFYEFFKCFTFRTWLLLLLLMWLPGFLSQIKSINRIFPFKLCILVSCLVGIFLPNIYSFSHKSVLTNQLTQFSKEIVEHAPGTDTHDWETVAANLNSYFYENKAWNTEYFFFNAAECQKAFRKVLLEPFSVKKDESSKIKSFGDSVPYIEEALQVYSTEFDKKWKLFNTEKVWSPDNLEHVQLPKKTYRYKFTWVLKRIFNLWLFPAFILFLACIYVSWDKGHLFRILCCGGGFLLMVRVFQNMRPFSMHMEDKMQFLSTIINEQESGANGWDEIAKKMNRYLFEKKVWTSEEFFFDGIDCEWFFNHFFYRLLSTKKPMFDRPLNVELWPYIKEAQLTRKQAPPV</sequence>
<dbReference type="EMBL" id="X75951">
    <property type="protein sequence ID" value="CAA53554.1"/>
    <property type="molecule type" value="Genomic_DNA"/>
</dbReference>
<dbReference type="EMBL" id="Z28219">
    <property type="protein sequence ID" value="CAA82064.1"/>
    <property type="molecule type" value="Genomic_DNA"/>
</dbReference>
<dbReference type="EMBL" id="BK006944">
    <property type="protein sequence ID" value="DAA08950.1"/>
    <property type="molecule type" value="Genomic_DNA"/>
</dbReference>
<dbReference type="PIR" id="S38062">
    <property type="entry name" value="S38062"/>
</dbReference>
<dbReference type="RefSeq" id="NP_012703.1">
    <property type="nucleotide sequence ID" value="NM_001179784.1"/>
</dbReference>
<dbReference type="BioGRID" id="33946">
    <property type="interactions" value="5"/>
</dbReference>
<dbReference type="DIP" id="DIP-7808N"/>
<dbReference type="FunCoup" id="P36034">
    <property type="interactions" value="35"/>
</dbReference>
<dbReference type="IntAct" id="P36034">
    <property type="interactions" value="1"/>
</dbReference>
<dbReference type="STRING" id="4932.YKL219W"/>
<dbReference type="PaxDb" id="4932-YKL219W"/>
<dbReference type="PeptideAtlas" id="P36034"/>
<dbReference type="EnsemblFungi" id="YKL219W_mRNA">
    <property type="protein sequence ID" value="YKL219W"/>
    <property type="gene ID" value="YKL219W"/>
</dbReference>
<dbReference type="GeneID" id="853661"/>
<dbReference type="KEGG" id="sce:YKL219W"/>
<dbReference type="AGR" id="SGD:S000001702"/>
<dbReference type="SGD" id="S000001702">
    <property type="gene designation" value="COS9"/>
</dbReference>
<dbReference type="VEuPathDB" id="FungiDB:YKL219W"/>
<dbReference type="eggNOG" id="ENOG502SAGH">
    <property type="taxonomic scope" value="Eukaryota"/>
</dbReference>
<dbReference type="GeneTree" id="ENSGT00940000176283"/>
<dbReference type="HOGENOM" id="CLU_062892_1_0_1"/>
<dbReference type="InParanoid" id="P36034"/>
<dbReference type="OMA" id="AWNTEYF"/>
<dbReference type="OrthoDB" id="4038835at2759"/>
<dbReference type="BioCyc" id="YEAST:G3O-31975-MONOMER"/>
<dbReference type="BioGRID-ORCS" id="853661">
    <property type="hits" value="0 hits in 10 CRISPR screens"/>
</dbReference>
<dbReference type="PRO" id="PR:P36034"/>
<dbReference type="Proteomes" id="UP000002311">
    <property type="component" value="Chromosome XI"/>
</dbReference>
<dbReference type="RNAct" id="P36034">
    <property type="molecule type" value="protein"/>
</dbReference>
<dbReference type="GO" id="GO:0005768">
    <property type="term" value="C:endosome"/>
    <property type="evidence" value="ECO:0000250"/>
    <property type="project" value="SGD"/>
</dbReference>
<dbReference type="GO" id="GO:0016020">
    <property type="term" value="C:membrane"/>
    <property type="evidence" value="ECO:0007669"/>
    <property type="project" value="UniProtKB-SubCell"/>
</dbReference>
<dbReference type="GO" id="GO:0043328">
    <property type="term" value="P:protein transport to vacuole involved in ubiquitin-dependent protein catabolic process via the multivesicular body sorting pathway"/>
    <property type="evidence" value="ECO:0000250"/>
    <property type="project" value="SGD"/>
</dbReference>
<dbReference type="InterPro" id="IPR001142">
    <property type="entry name" value="DUP/COS"/>
</dbReference>
<dbReference type="Pfam" id="PF00674">
    <property type="entry name" value="DUP"/>
    <property type="match status" value="2"/>
</dbReference>
<proteinExistence type="inferred from homology"/>
<feature type="chain" id="PRO_0000207520" description="Protein COS9">
    <location>
        <begin position="1"/>
        <end position="407"/>
    </location>
</feature>
<feature type="transmembrane region" description="Helical" evidence="1">
    <location>
        <begin position="75"/>
        <end position="95"/>
    </location>
</feature>
<feature type="transmembrane region" description="Helical" evidence="1">
    <location>
        <begin position="98"/>
        <end position="118"/>
    </location>
</feature>
<feature type="transmembrane region" description="Helical" evidence="1">
    <location>
        <begin position="261"/>
        <end position="281"/>
    </location>
</feature>
<name>COS9_YEAST</name>
<organism>
    <name type="scientific">Saccharomyces cerevisiae (strain ATCC 204508 / S288c)</name>
    <name type="common">Baker's yeast</name>
    <dbReference type="NCBI Taxonomy" id="559292"/>
    <lineage>
        <taxon>Eukaryota</taxon>
        <taxon>Fungi</taxon>
        <taxon>Dikarya</taxon>
        <taxon>Ascomycota</taxon>
        <taxon>Saccharomycotina</taxon>
        <taxon>Saccharomycetes</taxon>
        <taxon>Saccharomycetales</taxon>
        <taxon>Saccharomycetaceae</taxon>
        <taxon>Saccharomyces</taxon>
    </lineage>
</organism>
<keyword id="KW-0472">Membrane</keyword>
<keyword id="KW-1185">Reference proteome</keyword>
<keyword id="KW-0812">Transmembrane</keyword>
<keyword id="KW-1133">Transmembrane helix</keyword>
<accession>P36034</accession>
<accession>D6VWY4</accession>
<reference key="1">
    <citation type="journal article" date="1994" name="Yeast">
        <title>The complete sequencing of a 24.6 kb segment of yeast chromosome XI identified the known loci URA1, SAC1 and TRP3, and revealed 6 new open reading frames including homologues to the threonine dehydratases, membrane transporters, hydantoinases and the phospholipase A2-activating protein.</title>
        <authorList>
            <person name="Tzermia M."/>
            <person name="Horaitis O."/>
            <person name="Alexandraki D."/>
        </authorList>
    </citation>
    <scope>NUCLEOTIDE SEQUENCE [GENOMIC DNA]</scope>
    <source>
        <strain>ATCC 204508 / S288c</strain>
    </source>
</reference>
<reference key="2">
    <citation type="journal article" date="1994" name="Nature">
        <title>Complete DNA sequence of yeast chromosome XI.</title>
        <authorList>
            <person name="Dujon B."/>
            <person name="Alexandraki D."/>
            <person name="Andre B."/>
            <person name="Ansorge W."/>
            <person name="Baladron V."/>
            <person name="Ballesta J.P.G."/>
            <person name="Banrevi A."/>
            <person name="Bolle P.-A."/>
            <person name="Bolotin-Fukuhara M."/>
            <person name="Bossier P."/>
            <person name="Bou G."/>
            <person name="Boyer J."/>
            <person name="Buitrago M.J."/>
            <person name="Cheret G."/>
            <person name="Colleaux L."/>
            <person name="Daignan-Fornier B."/>
            <person name="del Rey F."/>
            <person name="Dion C."/>
            <person name="Domdey H."/>
            <person name="Duesterhoeft A."/>
            <person name="Duesterhus S."/>
            <person name="Entian K.-D."/>
            <person name="Erfle H."/>
            <person name="Esteban P.F."/>
            <person name="Feldmann H."/>
            <person name="Fernandes L."/>
            <person name="Fobo G.M."/>
            <person name="Fritz C."/>
            <person name="Fukuhara H."/>
            <person name="Gabel C."/>
            <person name="Gaillon L."/>
            <person name="Garcia-Cantalejo J.M."/>
            <person name="Garcia-Ramirez J.J."/>
            <person name="Gent M.E."/>
            <person name="Ghazvini M."/>
            <person name="Goffeau A."/>
            <person name="Gonzalez A."/>
            <person name="Grothues D."/>
            <person name="Guerreiro P."/>
            <person name="Hegemann J.H."/>
            <person name="Hewitt N."/>
            <person name="Hilger F."/>
            <person name="Hollenberg C.P."/>
            <person name="Horaitis O."/>
            <person name="Indge K.J."/>
            <person name="Jacquier A."/>
            <person name="James C.M."/>
            <person name="Jauniaux J.-C."/>
            <person name="Jimenez A."/>
            <person name="Keuchel H."/>
            <person name="Kirchrath L."/>
            <person name="Kleine K."/>
            <person name="Koetter P."/>
            <person name="Legrain P."/>
            <person name="Liebl S."/>
            <person name="Louis E.J."/>
            <person name="Maia e Silva A."/>
            <person name="Marck C."/>
            <person name="Monnier A.-L."/>
            <person name="Moestl D."/>
            <person name="Mueller S."/>
            <person name="Obermaier B."/>
            <person name="Oliver S.G."/>
            <person name="Pallier C."/>
            <person name="Pascolo S."/>
            <person name="Pfeiffer F."/>
            <person name="Philippsen P."/>
            <person name="Planta R.J."/>
            <person name="Pohl F.M."/>
            <person name="Pohl T.M."/>
            <person name="Poehlmann R."/>
            <person name="Portetelle D."/>
            <person name="Purnelle B."/>
            <person name="Puzos V."/>
            <person name="Ramezani Rad M."/>
            <person name="Rasmussen S.W."/>
            <person name="Remacha M.A."/>
            <person name="Revuelta J.L."/>
            <person name="Richard G.-F."/>
            <person name="Rieger M."/>
            <person name="Rodrigues-Pousada C."/>
            <person name="Rose M."/>
            <person name="Rupp T."/>
            <person name="Santos M.A."/>
            <person name="Schwager C."/>
            <person name="Sensen C."/>
            <person name="Skala J."/>
            <person name="Soares H."/>
            <person name="Sor F."/>
            <person name="Stegemann J."/>
            <person name="Tettelin H."/>
            <person name="Thierry A."/>
            <person name="Tzermia M."/>
            <person name="Urrestarazu L.A."/>
            <person name="van Dyck L."/>
            <person name="van Vliet-Reedijk J.C."/>
            <person name="Valens M."/>
            <person name="Vandenbol M."/>
            <person name="Vilela C."/>
            <person name="Vissers S."/>
            <person name="von Wettstein D."/>
            <person name="Voss H."/>
            <person name="Wiemann S."/>
            <person name="Xu G."/>
            <person name="Zimmermann J."/>
            <person name="Haasemann M."/>
            <person name="Becker I."/>
            <person name="Mewes H.-W."/>
        </authorList>
    </citation>
    <scope>NUCLEOTIDE SEQUENCE [LARGE SCALE GENOMIC DNA]</scope>
    <source>
        <strain>ATCC 204508 / S288c</strain>
    </source>
</reference>
<reference key="3">
    <citation type="journal article" date="2014" name="G3 (Bethesda)">
        <title>The reference genome sequence of Saccharomyces cerevisiae: Then and now.</title>
        <authorList>
            <person name="Engel S.R."/>
            <person name="Dietrich F.S."/>
            <person name="Fisk D.G."/>
            <person name="Binkley G."/>
            <person name="Balakrishnan R."/>
            <person name="Costanzo M.C."/>
            <person name="Dwight S.S."/>
            <person name="Hitz B.C."/>
            <person name="Karra K."/>
            <person name="Nash R.S."/>
            <person name="Weng S."/>
            <person name="Wong E.D."/>
            <person name="Lloyd P."/>
            <person name="Skrzypek M.S."/>
            <person name="Miyasato S.R."/>
            <person name="Simison M."/>
            <person name="Cherry J.M."/>
        </authorList>
    </citation>
    <scope>GENOME REANNOTATION</scope>
    <source>
        <strain>ATCC 204508 / S288c</strain>
    </source>
</reference>
<comment type="subcellular location">
    <subcellularLocation>
        <location evidence="2">Membrane</location>
        <topology evidence="2">Multi-pass membrane protein</topology>
    </subcellularLocation>
</comment>
<comment type="similarity">
    <text evidence="2">Belongs to the DUP/COS family.</text>
</comment>
<evidence type="ECO:0000255" key="1"/>
<evidence type="ECO:0000305" key="2"/>
<protein>
    <recommendedName>
        <fullName>Protein COS9</fullName>
    </recommendedName>
</protein>